<protein>
    <recommendedName>
        <fullName evidence="1">Small ribosomal subunit protein uS13</fullName>
    </recommendedName>
    <alternativeName>
        <fullName evidence="3">30S ribosomal protein S13</fullName>
    </alternativeName>
</protein>
<comment type="function">
    <text evidence="1">Located at the top of the head of the 30S subunit, it contacts several helices of the 16S rRNA. In the 70S ribosome it contacts the 23S rRNA (bridge B1a) and protein L5 of the 50S subunit (bridge B1b), connecting the 2 subunits; these bridges are implicated in subunit movement. Contacts the tRNAs in the A and P-sites.</text>
</comment>
<comment type="subunit">
    <text evidence="1">Part of the 30S ribosomal subunit. Forms a loose heterodimer with protein S19. Forms two bridges to the 50S subunit in the 70S ribosome.</text>
</comment>
<comment type="similarity">
    <text evidence="1">Belongs to the universal ribosomal protein uS13 family.</text>
</comment>
<dbReference type="EMBL" id="BA000039">
    <property type="protein sequence ID" value="BAC07656.1"/>
    <property type="molecule type" value="Genomic_DNA"/>
</dbReference>
<dbReference type="RefSeq" id="NP_680894.1">
    <property type="nucleotide sequence ID" value="NC_004113.1"/>
</dbReference>
<dbReference type="RefSeq" id="WP_011055958.1">
    <property type="nucleotide sequence ID" value="NC_004113.1"/>
</dbReference>
<dbReference type="SMR" id="Q8DML1"/>
<dbReference type="STRING" id="197221.gene:10746681"/>
<dbReference type="EnsemblBacteria" id="BAC07656">
    <property type="protein sequence ID" value="BAC07656"/>
    <property type="gene ID" value="BAC07656"/>
</dbReference>
<dbReference type="KEGG" id="tel:tlr0103"/>
<dbReference type="PATRIC" id="fig|197221.4.peg.106"/>
<dbReference type="eggNOG" id="COG0099">
    <property type="taxonomic scope" value="Bacteria"/>
</dbReference>
<dbReference type="Proteomes" id="UP000000440">
    <property type="component" value="Chromosome"/>
</dbReference>
<dbReference type="GO" id="GO:0005829">
    <property type="term" value="C:cytosol"/>
    <property type="evidence" value="ECO:0007669"/>
    <property type="project" value="TreeGrafter"/>
</dbReference>
<dbReference type="GO" id="GO:0015935">
    <property type="term" value="C:small ribosomal subunit"/>
    <property type="evidence" value="ECO:0007669"/>
    <property type="project" value="TreeGrafter"/>
</dbReference>
<dbReference type="GO" id="GO:0019843">
    <property type="term" value="F:rRNA binding"/>
    <property type="evidence" value="ECO:0007669"/>
    <property type="project" value="UniProtKB-UniRule"/>
</dbReference>
<dbReference type="GO" id="GO:0003735">
    <property type="term" value="F:structural constituent of ribosome"/>
    <property type="evidence" value="ECO:0007669"/>
    <property type="project" value="InterPro"/>
</dbReference>
<dbReference type="GO" id="GO:0000049">
    <property type="term" value="F:tRNA binding"/>
    <property type="evidence" value="ECO:0007669"/>
    <property type="project" value="UniProtKB-UniRule"/>
</dbReference>
<dbReference type="GO" id="GO:0006412">
    <property type="term" value="P:translation"/>
    <property type="evidence" value="ECO:0007669"/>
    <property type="project" value="UniProtKB-UniRule"/>
</dbReference>
<dbReference type="FunFam" id="1.10.8.50:FF:000001">
    <property type="entry name" value="30S ribosomal protein S13"/>
    <property type="match status" value="1"/>
</dbReference>
<dbReference type="FunFam" id="4.10.910.10:FF:000001">
    <property type="entry name" value="30S ribosomal protein S13"/>
    <property type="match status" value="1"/>
</dbReference>
<dbReference type="Gene3D" id="1.10.8.50">
    <property type="match status" value="1"/>
</dbReference>
<dbReference type="Gene3D" id="4.10.910.10">
    <property type="entry name" value="30s ribosomal protein s13, domain 2"/>
    <property type="match status" value="1"/>
</dbReference>
<dbReference type="HAMAP" id="MF_01315">
    <property type="entry name" value="Ribosomal_uS13"/>
    <property type="match status" value="1"/>
</dbReference>
<dbReference type="InterPro" id="IPR027437">
    <property type="entry name" value="Rbsml_uS13_C"/>
</dbReference>
<dbReference type="InterPro" id="IPR001892">
    <property type="entry name" value="Ribosomal_uS13"/>
</dbReference>
<dbReference type="InterPro" id="IPR010979">
    <property type="entry name" value="Ribosomal_uS13-like_H2TH"/>
</dbReference>
<dbReference type="InterPro" id="IPR019980">
    <property type="entry name" value="Ribosomal_uS13_bac-type"/>
</dbReference>
<dbReference type="InterPro" id="IPR018269">
    <property type="entry name" value="Ribosomal_uS13_CS"/>
</dbReference>
<dbReference type="NCBIfam" id="TIGR03631">
    <property type="entry name" value="uS13_bact"/>
    <property type="match status" value="1"/>
</dbReference>
<dbReference type="PANTHER" id="PTHR10871">
    <property type="entry name" value="30S RIBOSOMAL PROTEIN S13/40S RIBOSOMAL PROTEIN S18"/>
    <property type="match status" value="1"/>
</dbReference>
<dbReference type="PANTHER" id="PTHR10871:SF1">
    <property type="entry name" value="SMALL RIBOSOMAL SUBUNIT PROTEIN US13M"/>
    <property type="match status" value="1"/>
</dbReference>
<dbReference type="Pfam" id="PF00416">
    <property type="entry name" value="Ribosomal_S13"/>
    <property type="match status" value="1"/>
</dbReference>
<dbReference type="PIRSF" id="PIRSF002134">
    <property type="entry name" value="Ribosomal_S13"/>
    <property type="match status" value="1"/>
</dbReference>
<dbReference type="SUPFAM" id="SSF46946">
    <property type="entry name" value="S13-like H2TH domain"/>
    <property type="match status" value="1"/>
</dbReference>
<dbReference type="PROSITE" id="PS00646">
    <property type="entry name" value="RIBOSOMAL_S13_1"/>
    <property type="match status" value="1"/>
</dbReference>
<dbReference type="PROSITE" id="PS50159">
    <property type="entry name" value="RIBOSOMAL_S13_2"/>
    <property type="match status" value="1"/>
</dbReference>
<evidence type="ECO:0000255" key="1">
    <source>
        <dbReference type="HAMAP-Rule" id="MF_01315"/>
    </source>
</evidence>
<evidence type="ECO:0000256" key="2">
    <source>
        <dbReference type="SAM" id="MobiDB-lite"/>
    </source>
</evidence>
<evidence type="ECO:0000305" key="3"/>
<name>RS13_THEVB</name>
<reference key="1">
    <citation type="journal article" date="2002" name="DNA Res.">
        <title>Complete genome structure of the thermophilic cyanobacterium Thermosynechococcus elongatus BP-1.</title>
        <authorList>
            <person name="Nakamura Y."/>
            <person name="Kaneko T."/>
            <person name="Sato S."/>
            <person name="Ikeuchi M."/>
            <person name="Katoh H."/>
            <person name="Sasamoto S."/>
            <person name="Watanabe A."/>
            <person name="Iriguchi M."/>
            <person name="Kawashima K."/>
            <person name="Kimura T."/>
            <person name="Kishida Y."/>
            <person name="Kiyokawa C."/>
            <person name="Kohara M."/>
            <person name="Matsumoto M."/>
            <person name="Matsuno A."/>
            <person name="Nakazaki N."/>
            <person name="Shimpo S."/>
            <person name="Sugimoto M."/>
            <person name="Takeuchi C."/>
            <person name="Yamada M."/>
            <person name="Tabata S."/>
        </authorList>
    </citation>
    <scope>NUCLEOTIDE SEQUENCE [LARGE SCALE GENOMIC DNA]</scope>
    <source>
        <strain>NIES-2133 / IAM M-273 / BP-1</strain>
    </source>
</reference>
<gene>
    <name evidence="1" type="primary">rpsM</name>
    <name evidence="1" type="synonym">rps13</name>
    <name type="ordered locus">tlr0103</name>
</gene>
<feature type="chain" id="PRO_0000132155" description="Small ribosomal subunit protein uS13">
    <location>
        <begin position="1"/>
        <end position="126"/>
    </location>
</feature>
<feature type="region of interest" description="Disordered" evidence="2">
    <location>
        <begin position="96"/>
        <end position="126"/>
    </location>
</feature>
<feature type="compositionally biased region" description="Basic residues" evidence="2">
    <location>
        <begin position="100"/>
        <end position="126"/>
    </location>
</feature>
<keyword id="KW-1185">Reference proteome</keyword>
<keyword id="KW-0687">Ribonucleoprotein</keyword>
<keyword id="KW-0689">Ribosomal protein</keyword>
<keyword id="KW-0694">RNA-binding</keyword>
<keyword id="KW-0699">rRNA-binding</keyword>
<keyword id="KW-0820">tRNA-binding</keyword>
<sequence length="126" mass="14243">MARIAGVDLPRDKRIEIALTYIYGIGLTRSKEILAKTGVNPDTRTRDLTDADIAALRAAIDEYQVEGDLRRLEAMNIKRLMDIGCYRGRRHRLGLPVRGQRTRTNARTRRGSRRTVAGKKKPAAKK</sequence>
<accession>Q8DML1</accession>
<organism>
    <name type="scientific">Thermosynechococcus vestitus (strain NIES-2133 / IAM M-273 / BP-1)</name>
    <dbReference type="NCBI Taxonomy" id="197221"/>
    <lineage>
        <taxon>Bacteria</taxon>
        <taxon>Bacillati</taxon>
        <taxon>Cyanobacteriota</taxon>
        <taxon>Cyanophyceae</taxon>
        <taxon>Acaryochloridales</taxon>
        <taxon>Thermosynechococcaceae</taxon>
        <taxon>Thermosynechococcus</taxon>
    </lineage>
</organism>
<proteinExistence type="inferred from homology"/>